<gene>
    <name evidence="1" type="primary">rpsF</name>
    <name type="ordered locus">Fjoh_3482</name>
</gene>
<evidence type="ECO:0000255" key="1">
    <source>
        <dbReference type="HAMAP-Rule" id="MF_00360"/>
    </source>
</evidence>
<evidence type="ECO:0000305" key="2"/>
<dbReference type="EMBL" id="CP000685">
    <property type="protein sequence ID" value="ABQ06496.1"/>
    <property type="molecule type" value="Genomic_DNA"/>
</dbReference>
<dbReference type="RefSeq" id="WP_007810575.1">
    <property type="nucleotide sequence ID" value="NZ_MUGZ01000010.1"/>
</dbReference>
<dbReference type="SMR" id="A5FE77"/>
<dbReference type="STRING" id="376686.Fjoh_3482"/>
<dbReference type="KEGG" id="fjo:Fjoh_3482"/>
<dbReference type="eggNOG" id="COG0360">
    <property type="taxonomic scope" value="Bacteria"/>
</dbReference>
<dbReference type="HOGENOM" id="CLU_113441_4_3_10"/>
<dbReference type="OrthoDB" id="9812702at2"/>
<dbReference type="Proteomes" id="UP000006694">
    <property type="component" value="Chromosome"/>
</dbReference>
<dbReference type="GO" id="GO:0005737">
    <property type="term" value="C:cytoplasm"/>
    <property type="evidence" value="ECO:0007669"/>
    <property type="project" value="UniProtKB-ARBA"/>
</dbReference>
<dbReference type="GO" id="GO:1990904">
    <property type="term" value="C:ribonucleoprotein complex"/>
    <property type="evidence" value="ECO:0007669"/>
    <property type="project" value="UniProtKB-KW"/>
</dbReference>
<dbReference type="GO" id="GO:0005840">
    <property type="term" value="C:ribosome"/>
    <property type="evidence" value="ECO:0007669"/>
    <property type="project" value="UniProtKB-KW"/>
</dbReference>
<dbReference type="GO" id="GO:0070181">
    <property type="term" value="F:small ribosomal subunit rRNA binding"/>
    <property type="evidence" value="ECO:0007669"/>
    <property type="project" value="TreeGrafter"/>
</dbReference>
<dbReference type="GO" id="GO:0003735">
    <property type="term" value="F:structural constituent of ribosome"/>
    <property type="evidence" value="ECO:0007669"/>
    <property type="project" value="InterPro"/>
</dbReference>
<dbReference type="GO" id="GO:0006412">
    <property type="term" value="P:translation"/>
    <property type="evidence" value="ECO:0007669"/>
    <property type="project" value="UniProtKB-UniRule"/>
</dbReference>
<dbReference type="CDD" id="cd00473">
    <property type="entry name" value="bS6"/>
    <property type="match status" value="1"/>
</dbReference>
<dbReference type="Gene3D" id="3.30.70.60">
    <property type="match status" value="1"/>
</dbReference>
<dbReference type="HAMAP" id="MF_00360">
    <property type="entry name" value="Ribosomal_bS6"/>
    <property type="match status" value="1"/>
</dbReference>
<dbReference type="InterPro" id="IPR000529">
    <property type="entry name" value="Ribosomal_bS6"/>
</dbReference>
<dbReference type="InterPro" id="IPR035980">
    <property type="entry name" value="Ribosomal_bS6_sf"/>
</dbReference>
<dbReference type="InterPro" id="IPR020814">
    <property type="entry name" value="Ribosomal_S6_plastid/chlpt"/>
</dbReference>
<dbReference type="InterPro" id="IPR014717">
    <property type="entry name" value="Transl_elong_EF1B/ribsomal_bS6"/>
</dbReference>
<dbReference type="NCBIfam" id="TIGR00166">
    <property type="entry name" value="S6"/>
    <property type="match status" value="1"/>
</dbReference>
<dbReference type="PANTHER" id="PTHR21011">
    <property type="entry name" value="MITOCHONDRIAL 28S RIBOSOMAL PROTEIN S6"/>
    <property type="match status" value="1"/>
</dbReference>
<dbReference type="PANTHER" id="PTHR21011:SF1">
    <property type="entry name" value="SMALL RIBOSOMAL SUBUNIT PROTEIN BS6M"/>
    <property type="match status" value="1"/>
</dbReference>
<dbReference type="Pfam" id="PF01250">
    <property type="entry name" value="Ribosomal_S6"/>
    <property type="match status" value="1"/>
</dbReference>
<dbReference type="SUPFAM" id="SSF54995">
    <property type="entry name" value="Ribosomal protein S6"/>
    <property type="match status" value="1"/>
</dbReference>
<name>RS6_FLAJ1</name>
<feature type="chain" id="PRO_1000079446" description="Small ribosomal subunit protein bS6">
    <location>
        <begin position="1"/>
        <end position="113"/>
    </location>
</feature>
<comment type="function">
    <text evidence="1">Binds together with bS18 to 16S ribosomal RNA.</text>
</comment>
<comment type="similarity">
    <text evidence="1">Belongs to the bacterial ribosomal protein bS6 family.</text>
</comment>
<organism>
    <name type="scientific">Flavobacterium johnsoniae (strain ATCC 17061 / DSM 2064 / JCM 8514 / BCRC 14874 / CCUG 350202 / NBRC 14942 / NCIMB 11054 / UW101)</name>
    <name type="common">Cytophaga johnsonae</name>
    <dbReference type="NCBI Taxonomy" id="376686"/>
    <lineage>
        <taxon>Bacteria</taxon>
        <taxon>Pseudomonadati</taxon>
        <taxon>Bacteroidota</taxon>
        <taxon>Flavobacteriia</taxon>
        <taxon>Flavobacteriales</taxon>
        <taxon>Flavobacteriaceae</taxon>
        <taxon>Flavobacterium</taxon>
    </lineage>
</organism>
<keyword id="KW-0687">Ribonucleoprotein</keyword>
<keyword id="KW-0689">Ribosomal protein</keyword>
<keyword id="KW-0694">RNA-binding</keyword>
<keyword id="KW-0699">rRNA-binding</keyword>
<proteinExistence type="inferred from homology"/>
<accession>A5FE77</accession>
<sequence>MNHYETVFILNPVLSEVQVKETVTKFEEFLTSRGAEMVSKEDWGLKKMAYEIQNKKSGFYHLFEFKVAGEVLIAFETEFRRDERVMRFLTVSLDKHAISWAERRRAKLKSTKA</sequence>
<reference key="1">
    <citation type="journal article" date="2009" name="Appl. Environ. Microbiol.">
        <title>Novel features of the polysaccharide-digesting gliding bacterium Flavobacterium johnsoniae as revealed by genome sequence analysis.</title>
        <authorList>
            <person name="McBride M.J."/>
            <person name="Xie G."/>
            <person name="Martens E.C."/>
            <person name="Lapidus A."/>
            <person name="Henrissat B."/>
            <person name="Rhodes R.G."/>
            <person name="Goltsman E."/>
            <person name="Wang W."/>
            <person name="Xu J."/>
            <person name="Hunnicutt D.W."/>
            <person name="Staroscik A.M."/>
            <person name="Hoover T.R."/>
            <person name="Cheng Y.Q."/>
            <person name="Stein J.L."/>
        </authorList>
    </citation>
    <scope>NUCLEOTIDE SEQUENCE [LARGE SCALE GENOMIC DNA]</scope>
    <source>
        <strain>ATCC 17061 / DSM 2064 / JCM 8514 / BCRC 14874 / CCUG 350202 / NBRC 14942 / NCIMB 11054 / UW101</strain>
    </source>
</reference>
<protein>
    <recommendedName>
        <fullName evidence="1">Small ribosomal subunit protein bS6</fullName>
    </recommendedName>
    <alternativeName>
        <fullName evidence="2">30S ribosomal protein S6</fullName>
    </alternativeName>
</protein>